<organism>
    <name type="scientific">Salmonella enteritidis PT4 (strain P125109)</name>
    <dbReference type="NCBI Taxonomy" id="550537"/>
    <lineage>
        <taxon>Bacteria</taxon>
        <taxon>Pseudomonadati</taxon>
        <taxon>Pseudomonadota</taxon>
        <taxon>Gammaproteobacteria</taxon>
        <taxon>Enterobacterales</taxon>
        <taxon>Enterobacteriaceae</taxon>
        <taxon>Salmonella</taxon>
    </lineage>
</organism>
<name>GLO2_SALEP</name>
<evidence type="ECO:0000255" key="1">
    <source>
        <dbReference type="HAMAP-Rule" id="MF_01374"/>
    </source>
</evidence>
<sequence>MNLNSIPAFQDNYIWVLTNDEGRCVIVDPGEAAPVLKAIAEHKWMPEAIFLTHHHHDHVGGVKELLQHFPQMTVYGPAETQDKGATHLVGDGDTIRVLGEKFTLFATPGHTLGHVCYFSHPYLFCGDTLFSGGCGRLFEGTPSQMYQSLMKINSLPDDTLICSAHEYTLANIKFALSILPHDSFINEYYRKVKELRVKKQMTLPVILKNERKINLFLRTEDIDLINEINKETILQQPEARFAWLRSKKDTF</sequence>
<feature type="chain" id="PRO_1000144796" description="Hydroxyacylglutathione hydrolase">
    <location>
        <begin position="1"/>
        <end position="251"/>
    </location>
</feature>
<feature type="binding site" evidence="1">
    <location>
        <position position="53"/>
    </location>
    <ligand>
        <name>Zn(2+)</name>
        <dbReference type="ChEBI" id="CHEBI:29105"/>
        <label>1</label>
    </ligand>
</feature>
<feature type="binding site" evidence="1">
    <location>
        <position position="55"/>
    </location>
    <ligand>
        <name>Zn(2+)</name>
        <dbReference type="ChEBI" id="CHEBI:29105"/>
        <label>1</label>
    </ligand>
</feature>
<feature type="binding site" evidence="1">
    <location>
        <position position="57"/>
    </location>
    <ligand>
        <name>Zn(2+)</name>
        <dbReference type="ChEBI" id="CHEBI:29105"/>
        <label>2</label>
    </ligand>
</feature>
<feature type="binding site" evidence="1">
    <location>
        <position position="58"/>
    </location>
    <ligand>
        <name>Zn(2+)</name>
        <dbReference type="ChEBI" id="CHEBI:29105"/>
        <label>2</label>
    </ligand>
</feature>
<feature type="binding site" evidence="1">
    <location>
        <position position="110"/>
    </location>
    <ligand>
        <name>Zn(2+)</name>
        <dbReference type="ChEBI" id="CHEBI:29105"/>
        <label>1</label>
    </ligand>
</feature>
<feature type="binding site" evidence="1">
    <location>
        <position position="127"/>
    </location>
    <ligand>
        <name>Zn(2+)</name>
        <dbReference type="ChEBI" id="CHEBI:29105"/>
        <label>1</label>
    </ligand>
</feature>
<feature type="binding site" evidence="1">
    <location>
        <position position="127"/>
    </location>
    <ligand>
        <name>Zn(2+)</name>
        <dbReference type="ChEBI" id="CHEBI:29105"/>
        <label>2</label>
    </ligand>
</feature>
<feature type="binding site" evidence="1">
    <location>
        <position position="165"/>
    </location>
    <ligand>
        <name>Zn(2+)</name>
        <dbReference type="ChEBI" id="CHEBI:29105"/>
        <label>2</label>
    </ligand>
</feature>
<proteinExistence type="inferred from homology"/>
<comment type="function">
    <text evidence="1">Thiolesterase that catalyzes the hydrolysis of S-D-lactoyl-glutathione to form glutathione and D-lactic acid.</text>
</comment>
<comment type="catalytic activity">
    <reaction evidence="1">
        <text>an S-(2-hydroxyacyl)glutathione + H2O = a 2-hydroxy carboxylate + glutathione + H(+)</text>
        <dbReference type="Rhea" id="RHEA:21864"/>
        <dbReference type="ChEBI" id="CHEBI:15377"/>
        <dbReference type="ChEBI" id="CHEBI:15378"/>
        <dbReference type="ChEBI" id="CHEBI:57925"/>
        <dbReference type="ChEBI" id="CHEBI:58896"/>
        <dbReference type="ChEBI" id="CHEBI:71261"/>
        <dbReference type="EC" id="3.1.2.6"/>
    </reaction>
</comment>
<comment type="cofactor">
    <cofactor evidence="1">
        <name>Zn(2+)</name>
        <dbReference type="ChEBI" id="CHEBI:29105"/>
    </cofactor>
    <text evidence="1">Binds 2 Zn(2+) ions per subunit.</text>
</comment>
<comment type="pathway">
    <text evidence="1">Secondary metabolite metabolism; methylglyoxal degradation; (R)-lactate from methylglyoxal: step 2/2.</text>
</comment>
<comment type="subunit">
    <text evidence="1">Monomer.</text>
</comment>
<comment type="similarity">
    <text evidence="1">Belongs to the metallo-beta-lactamase superfamily. Glyoxalase II family.</text>
</comment>
<gene>
    <name evidence="1" type="primary">gloB</name>
    <name type="ordered locus">SEN0263</name>
</gene>
<accession>B5R447</accession>
<reference key="1">
    <citation type="journal article" date="2008" name="Genome Res.">
        <title>Comparative genome analysis of Salmonella enteritidis PT4 and Salmonella gallinarum 287/91 provides insights into evolutionary and host adaptation pathways.</title>
        <authorList>
            <person name="Thomson N.R."/>
            <person name="Clayton D.J."/>
            <person name="Windhorst D."/>
            <person name="Vernikos G."/>
            <person name="Davidson S."/>
            <person name="Churcher C."/>
            <person name="Quail M.A."/>
            <person name="Stevens M."/>
            <person name="Jones M.A."/>
            <person name="Watson M."/>
            <person name="Barron A."/>
            <person name="Layton A."/>
            <person name="Pickard D."/>
            <person name="Kingsley R.A."/>
            <person name="Bignell A."/>
            <person name="Clark L."/>
            <person name="Harris B."/>
            <person name="Ormond D."/>
            <person name="Abdellah Z."/>
            <person name="Brooks K."/>
            <person name="Cherevach I."/>
            <person name="Chillingworth T."/>
            <person name="Woodward J."/>
            <person name="Norberczak H."/>
            <person name="Lord A."/>
            <person name="Arrowsmith C."/>
            <person name="Jagels K."/>
            <person name="Moule S."/>
            <person name="Mungall K."/>
            <person name="Saunders M."/>
            <person name="Whitehead S."/>
            <person name="Chabalgoity J.A."/>
            <person name="Maskell D."/>
            <person name="Humphreys T."/>
            <person name="Roberts M."/>
            <person name="Barrow P.A."/>
            <person name="Dougan G."/>
            <person name="Parkhill J."/>
        </authorList>
    </citation>
    <scope>NUCLEOTIDE SEQUENCE [LARGE SCALE GENOMIC DNA]</scope>
    <source>
        <strain>P125109</strain>
    </source>
</reference>
<protein>
    <recommendedName>
        <fullName evidence="1">Hydroxyacylglutathione hydrolase</fullName>
        <ecNumber evidence="1">3.1.2.6</ecNumber>
    </recommendedName>
    <alternativeName>
        <fullName evidence="1">Glyoxalase II</fullName>
        <shortName evidence="1">Glx II</shortName>
    </alternativeName>
</protein>
<keyword id="KW-0378">Hydrolase</keyword>
<keyword id="KW-0479">Metal-binding</keyword>
<keyword id="KW-0862">Zinc</keyword>
<dbReference type="EC" id="3.1.2.6" evidence="1"/>
<dbReference type="EMBL" id="AM933172">
    <property type="protein sequence ID" value="CAR31850.1"/>
    <property type="molecule type" value="Genomic_DNA"/>
</dbReference>
<dbReference type="RefSeq" id="WP_001052774.1">
    <property type="nucleotide sequence ID" value="NC_011294.1"/>
</dbReference>
<dbReference type="SMR" id="B5R447"/>
<dbReference type="KEGG" id="set:SEN0263"/>
<dbReference type="HOGENOM" id="CLU_030571_4_1_6"/>
<dbReference type="UniPathway" id="UPA00619">
    <property type="reaction ID" value="UER00676"/>
</dbReference>
<dbReference type="Proteomes" id="UP000000613">
    <property type="component" value="Chromosome"/>
</dbReference>
<dbReference type="GO" id="GO:0004416">
    <property type="term" value="F:hydroxyacylglutathione hydrolase activity"/>
    <property type="evidence" value="ECO:0007669"/>
    <property type="project" value="UniProtKB-UniRule"/>
</dbReference>
<dbReference type="GO" id="GO:0046872">
    <property type="term" value="F:metal ion binding"/>
    <property type="evidence" value="ECO:0007669"/>
    <property type="project" value="UniProtKB-KW"/>
</dbReference>
<dbReference type="GO" id="GO:0019243">
    <property type="term" value="P:methylglyoxal catabolic process to D-lactate via S-lactoyl-glutathione"/>
    <property type="evidence" value="ECO:0007669"/>
    <property type="project" value="InterPro"/>
</dbReference>
<dbReference type="CDD" id="cd07723">
    <property type="entry name" value="hydroxyacylglutathione_hydrolase_MBL-fold"/>
    <property type="match status" value="1"/>
</dbReference>
<dbReference type="Gene3D" id="3.60.15.10">
    <property type="entry name" value="Ribonuclease Z/Hydroxyacylglutathione hydrolase-like"/>
    <property type="match status" value="1"/>
</dbReference>
<dbReference type="HAMAP" id="MF_01374">
    <property type="entry name" value="Glyoxalase_2"/>
    <property type="match status" value="1"/>
</dbReference>
<dbReference type="InterPro" id="IPR035680">
    <property type="entry name" value="Clx_II_MBL"/>
</dbReference>
<dbReference type="InterPro" id="IPR050110">
    <property type="entry name" value="Glyoxalase_II_hydrolase"/>
</dbReference>
<dbReference type="InterPro" id="IPR032282">
    <property type="entry name" value="HAGH_C"/>
</dbReference>
<dbReference type="InterPro" id="IPR017782">
    <property type="entry name" value="Hydroxyacylglutathione_Hdrlase"/>
</dbReference>
<dbReference type="InterPro" id="IPR001279">
    <property type="entry name" value="Metallo-B-lactamas"/>
</dbReference>
<dbReference type="InterPro" id="IPR036866">
    <property type="entry name" value="RibonucZ/Hydroxyglut_hydro"/>
</dbReference>
<dbReference type="NCBIfam" id="TIGR03413">
    <property type="entry name" value="GSH_gloB"/>
    <property type="match status" value="1"/>
</dbReference>
<dbReference type="NCBIfam" id="NF007597">
    <property type="entry name" value="PRK10241.1"/>
    <property type="match status" value="1"/>
</dbReference>
<dbReference type="PANTHER" id="PTHR43705">
    <property type="entry name" value="HYDROXYACYLGLUTATHIONE HYDROLASE"/>
    <property type="match status" value="1"/>
</dbReference>
<dbReference type="PANTHER" id="PTHR43705:SF1">
    <property type="entry name" value="HYDROXYACYLGLUTATHIONE HYDROLASE GLOB"/>
    <property type="match status" value="1"/>
</dbReference>
<dbReference type="Pfam" id="PF16123">
    <property type="entry name" value="HAGH_C"/>
    <property type="match status" value="1"/>
</dbReference>
<dbReference type="Pfam" id="PF00753">
    <property type="entry name" value="Lactamase_B"/>
    <property type="match status" value="1"/>
</dbReference>
<dbReference type="PIRSF" id="PIRSF005457">
    <property type="entry name" value="Glx"/>
    <property type="match status" value="1"/>
</dbReference>
<dbReference type="SMART" id="SM00849">
    <property type="entry name" value="Lactamase_B"/>
    <property type="match status" value="1"/>
</dbReference>
<dbReference type="SUPFAM" id="SSF56281">
    <property type="entry name" value="Metallo-hydrolase/oxidoreductase"/>
    <property type="match status" value="1"/>
</dbReference>